<organism>
    <name type="scientific">Arabidopsis thaliana</name>
    <name type="common">Mouse-ear cress</name>
    <dbReference type="NCBI Taxonomy" id="3702"/>
    <lineage>
        <taxon>Eukaryota</taxon>
        <taxon>Viridiplantae</taxon>
        <taxon>Streptophyta</taxon>
        <taxon>Embryophyta</taxon>
        <taxon>Tracheophyta</taxon>
        <taxon>Spermatophyta</taxon>
        <taxon>Magnoliopsida</taxon>
        <taxon>eudicotyledons</taxon>
        <taxon>Gunneridae</taxon>
        <taxon>Pentapetalae</taxon>
        <taxon>rosids</taxon>
        <taxon>malvids</taxon>
        <taxon>Brassicales</taxon>
        <taxon>Brassicaceae</taxon>
        <taxon>Camelineae</taxon>
        <taxon>Arabidopsis</taxon>
    </lineage>
</organism>
<sequence length="197" mass="21530">MSASRFIKCVTVGDGAVGKTCLLISYTSNTFPTDYVPTVFDNFSANVVVNGATVNLGLWDTAGQEDYNRLRPLSYRGADVFILAFSLISKASYENVSKKWIPELKHYAPGVPIVLVGTKLDLRDDKQFFIDHPGAVPITTAQGEELKKLIGAPAYIECSSKTQENVKGVFDAAIRVVLQPPKQKKKKSKAQKACSIL</sequence>
<feature type="chain" id="PRO_0000198915" description="Rac-like GTP-binding protein ARAC1">
    <location>
        <begin position="1"/>
        <end position="194"/>
    </location>
</feature>
<feature type="propeptide" id="PRO_0000227580" description="Removed in mature form" evidence="2">
    <location>
        <begin position="195"/>
        <end position="197"/>
    </location>
</feature>
<feature type="short sequence motif" description="Effector region" evidence="2">
    <location>
        <begin position="35"/>
        <end position="43"/>
    </location>
</feature>
<feature type="binding site" evidence="1">
    <location>
        <begin position="13"/>
        <end position="20"/>
    </location>
    <ligand>
        <name>GTP</name>
        <dbReference type="ChEBI" id="CHEBI:37565"/>
    </ligand>
</feature>
<feature type="binding site" evidence="1">
    <location>
        <begin position="60"/>
        <end position="64"/>
    </location>
    <ligand>
        <name>GTP</name>
        <dbReference type="ChEBI" id="CHEBI:37565"/>
    </ligand>
</feature>
<feature type="binding site" evidence="1">
    <location>
        <begin position="118"/>
        <end position="121"/>
    </location>
    <ligand>
        <name>GTP</name>
        <dbReference type="ChEBI" id="CHEBI:37565"/>
    </ligand>
</feature>
<feature type="modified residue" description="Cysteine methyl ester" evidence="2">
    <location>
        <position position="194"/>
    </location>
</feature>
<feature type="lipid moiety-binding region" description="S-geranylgeranyl cysteine" evidence="2">
    <location>
        <position position="194"/>
    </location>
</feature>
<proteinExistence type="evidence at protein level"/>
<evidence type="ECO:0000250" key="1"/>
<evidence type="ECO:0000255" key="2"/>
<evidence type="ECO:0000269" key="3">
    <source>
    </source>
</evidence>
<evidence type="ECO:0000269" key="4">
    <source>
    </source>
</evidence>
<evidence type="ECO:0000305" key="5"/>
<dbReference type="EMBL" id="U64919">
    <property type="protein sequence ID" value="AAD00113.1"/>
    <property type="molecule type" value="mRNA"/>
</dbReference>
<dbReference type="EMBL" id="U41295">
    <property type="protein sequence ID" value="AAC49851.1"/>
    <property type="molecule type" value="mRNA"/>
</dbReference>
<dbReference type="EMBL" id="AF115466">
    <property type="protein sequence ID" value="AAF40237.1"/>
    <property type="molecule type" value="Genomic_DNA"/>
</dbReference>
<dbReference type="EMBL" id="CP002685">
    <property type="protein sequence ID" value="AEC06689.1"/>
    <property type="molecule type" value="Genomic_DNA"/>
</dbReference>
<dbReference type="EMBL" id="CP002685">
    <property type="protein sequence ID" value="AEC06690.1"/>
    <property type="molecule type" value="Genomic_DNA"/>
</dbReference>
<dbReference type="EMBL" id="AY093046">
    <property type="protein sequence ID" value="AAM13045.1"/>
    <property type="molecule type" value="mRNA"/>
</dbReference>
<dbReference type="EMBL" id="BT000393">
    <property type="protein sequence ID" value="AAN15712.1"/>
    <property type="molecule type" value="mRNA"/>
</dbReference>
<dbReference type="PIR" id="T08857">
    <property type="entry name" value="T08857"/>
</dbReference>
<dbReference type="RefSeq" id="NP_001077910.1">
    <property type="nucleotide sequence ID" value="NM_001084441.2"/>
</dbReference>
<dbReference type="RefSeq" id="NP_179371.1">
    <property type="nucleotide sequence ID" value="NM_127334.4"/>
</dbReference>
<dbReference type="SMR" id="Q38902"/>
<dbReference type="BioGRID" id="1647">
    <property type="interactions" value="5"/>
</dbReference>
<dbReference type="DIP" id="DIP-29819N"/>
<dbReference type="FunCoup" id="Q38902">
    <property type="interactions" value="3304"/>
</dbReference>
<dbReference type="IntAct" id="Q38902">
    <property type="interactions" value="3"/>
</dbReference>
<dbReference type="STRING" id="3702.Q38902"/>
<dbReference type="PaxDb" id="3702-AT2G17800.1"/>
<dbReference type="ProteomicsDB" id="236448"/>
<dbReference type="EnsemblPlants" id="AT2G17800.1">
    <property type="protein sequence ID" value="AT2G17800.1"/>
    <property type="gene ID" value="AT2G17800"/>
</dbReference>
<dbReference type="EnsemblPlants" id="AT2G17800.2">
    <property type="protein sequence ID" value="AT2G17800.2"/>
    <property type="gene ID" value="AT2G17800"/>
</dbReference>
<dbReference type="GeneID" id="816290"/>
<dbReference type="Gramene" id="AT2G17800.1">
    <property type="protein sequence ID" value="AT2G17800.1"/>
    <property type="gene ID" value="AT2G17800"/>
</dbReference>
<dbReference type="Gramene" id="AT2G17800.2">
    <property type="protein sequence ID" value="AT2G17800.2"/>
    <property type="gene ID" value="AT2G17800"/>
</dbReference>
<dbReference type="KEGG" id="ath:AT2G17800"/>
<dbReference type="Araport" id="AT2G17800"/>
<dbReference type="TAIR" id="AT2G17800">
    <property type="gene designation" value="ARAC1"/>
</dbReference>
<dbReference type="eggNOG" id="KOG0393">
    <property type="taxonomic scope" value="Eukaryota"/>
</dbReference>
<dbReference type="HOGENOM" id="CLU_041217_21_3_1"/>
<dbReference type="InParanoid" id="Q38902"/>
<dbReference type="OMA" id="WVLEIRR"/>
<dbReference type="OrthoDB" id="1059378at2759"/>
<dbReference type="PhylomeDB" id="Q38902"/>
<dbReference type="PRO" id="PR:Q38902"/>
<dbReference type="Proteomes" id="UP000006548">
    <property type="component" value="Chromosome 2"/>
</dbReference>
<dbReference type="ExpressionAtlas" id="Q38902">
    <property type="expression patterns" value="baseline and differential"/>
</dbReference>
<dbReference type="GO" id="GO:0005737">
    <property type="term" value="C:cytoplasm"/>
    <property type="evidence" value="ECO:0007005"/>
    <property type="project" value="TAIR"/>
</dbReference>
<dbReference type="GO" id="GO:0005634">
    <property type="term" value="C:nucleus"/>
    <property type="evidence" value="ECO:0007005"/>
    <property type="project" value="TAIR"/>
</dbReference>
<dbReference type="GO" id="GO:0009524">
    <property type="term" value="C:phragmoplast"/>
    <property type="evidence" value="ECO:0007005"/>
    <property type="project" value="TAIR"/>
</dbReference>
<dbReference type="GO" id="GO:0005886">
    <property type="term" value="C:plasma membrane"/>
    <property type="evidence" value="ECO:0000314"/>
    <property type="project" value="TAIR"/>
</dbReference>
<dbReference type="GO" id="GO:0005819">
    <property type="term" value="C:spindle"/>
    <property type="evidence" value="ECO:0007005"/>
    <property type="project" value="TAIR"/>
</dbReference>
<dbReference type="GO" id="GO:0005525">
    <property type="term" value="F:GTP binding"/>
    <property type="evidence" value="ECO:0007669"/>
    <property type="project" value="UniProtKB-KW"/>
</dbReference>
<dbReference type="GO" id="GO:0003924">
    <property type="term" value="F:GTPase activity"/>
    <property type="evidence" value="ECO:0007669"/>
    <property type="project" value="InterPro"/>
</dbReference>
<dbReference type="GO" id="GO:0009738">
    <property type="term" value="P:abscisic acid-activated signaling pathway"/>
    <property type="evidence" value="ECO:0000304"/>
    <property type="project" value="TAIR"/>
</dbReference>
<dbReference type="GO" id="GO:0009734">
    <property type="term" value="P:auxin-activated signaling pathway"/>
    <property type="evidence" value="ECO:0000315"/>
    <property type="project" value="TAIR"/>
</dbReference>
<dbReference type="GO" id="GO:0007264">
    <property type="term" value="P:small GTPase-mediated signal transduction"/>
    <property type="evidence" value="ECO:0007669"/>
    <property type="project" value="InterPro"/>
</dbReference>
<dbReference type="CDD" id="cd04133">
    <property type="entry name" value="Rop_like"/>
    <property type="match status" value="1"/>
</dbReference>
<dbReference type="FunFam" id="3.40.50.300:FF:000336">
    <property type="entry name" value="rac-like GTP-binding protein RHO1"/>
    <property type="match status" value="1"/>
</dbReference>
<dbReference type="Gene3D" id="3.40.50.300">
    <property type="entry name" value="P-loop containing nucleotide triphosphate hydrolases"/>
    <property type="match status" value="1"/>
</dbReference>
<dbReference type="InterPro" id="IPR027417">
    <property type="entry name" value="P-loop_NTPase"/>
</dbReference>
<dbReference type="InterPro" id="IPR005225">
    <property type="entry name" value="Small_GTP-bd"/>
</dbReference>
<dbReference type="InterPro" id="IPR001806">
    <property type="entry name" value="Small_GTPase"/>
</dbReference>
<dbReference type="InterPro" id="IPR003578">
    <property type="entry name" value="Small_GTPase_Rho"/>
</dbReference>
<dbReference type="NCBIfam" id="TIGR00231">
    <property type="entry name" value="small_GTP"/>
    <property type="match status" value="1"/>
</dbReference>
<dbReference type="PANTHER" id="PTHR24072">
    <property type="entry name" value="RHO FAMILY GTPASE"/>
    <property type="match status" value="1"/>
</dbReference>
<dbReference type="Pfam" id="PF00071">
    <property type="entry name" value="Ras"/>
    <property type="match status" value="1"/>
</dbReference>
<dbReference type="PRINTS" id="PR00449">
    <property type="entry name" value="RASTRNSFRMNG"/>
</dbReference>
<dbReference type="SMART" id="SM00175">
    <property type="entry name" value="RAB"/>
    <property type="match status" value="1"/>
</dbReference>
<dbReference type="SMART" id="SM00173">
    <property type="entry name" value="RAS"/>
    <property type="match status" value="1"/>
</dbReference>
<dbReference type="SMART" id="SM00174">
    <property type="entry name" value="RHO"/>
    <property type="match status" value="1"/>
</dbReference>
<dbReference type="SUPFAM" id="SSF52540">
    <property type="entry name" value="P-loop containing nucleoside triphosphate hydrolases"/>
    <property type="match status" value="1"/>
</dbReference>
<dbReference type="PROSITE" id="PS51420">
    <property type="entry name" value="RHO"/>
    <property type="match status" value="1"/>
</dbReference>
<comment type="function">
    <text evidence="1">Inactive GDP-bound Rho GTPases reside in the cytosol, are found in a complex with Rho GDP-dissociation inhibitors (Rho GDIs), and are released from the GDI protein in order to translocate to membranes upon activation.</text>
</comment>
<comment type="subunit">
    <text evidence="3">Interacts with SPK1.</text>
</comment>
<comment type="subcellular location">
    <subcellularLocation>
        <location evidence="1">Cytoplasm</location>
    </subcellularLocation>
    <subcellularLocation>
        <location evidence="1">Membrane</location>
        <topology evidence="1">Peripheral membrane protein</topology>
    </subcellularLocation>
    <text>Associated with the membrane when activated.</text>
</comment>
<comment type="tissue specificity">
    <text evidence="4">Ubiquitous.</text>
</comment>
<comment type="similarity">
    <text evidence="5">Belongs to the small GTPase superfamily. Rho family.</text>
</comment>
<reference key="1">
    <citation type="journal article" date="1996" name="Plant Mol. Biol.">
        <title>Identification and isoprenylation of plant GTP-binding proteins.</title>
        <authorList>
            <person name="Biermann B.J."/>
            <person name="Randall S.K."/>
            <person name="Crowell D.N."/>
        </authorList>
    </citation>
    <scope>NUCLEOTIDE SEQUENCE [MRNA]</scope>
</reference>
<reference key="2">
    <citation type="journal article" date="1997" name="Plant Mol. Biol.">
        <title>Cloning and characterization of rac-like cDNAs from Arabidopsis thaliana.</title>
        <authorList>
            <person name="Winge P."/>
            <person name="Brembu T."/>
            <person name="Bones A.M."/>
        </authorList>
    </citation>
    <scope>NUCLEOTIDE SEQUENCE [MRNA]</scope>
    <source>
        <strain>cv. Columbia</strain>
    </source>
</reference>
<reference key="3">
    <citation type="journal article" date="2000" name="Genetics">
        <title>Genetic structure and evolution of RAC-GTPases in Arabidopsis thaliana.</title>
        <authorList>
            <person name="Winge P."/>
            <person name="Brembu T."/>
            <person name="Kristensen R."/>
            <person name="Bones A.M."/>
        </authorList>
    </citation>
    <scope>NUCLEOTIDE SEQUENCE [GENOMIC DNA]</scope>
    <source>
        <strain>cv. Landsberg erecta</strain>
    </source>
</reference>
<reference key="4">
    <citation type="journal article" date="1999" name="Nature">
        <title>Sequence and analysis of chromosome 2 of the plant Arabidopsis thaliana.</title>
        <authorList>
            <person name="Lin X."/>
            <person name="Kaul S."/>
            <person name="Rounsley S.D."/>
            <person name="Shea T.P."/>
            <person name="Benito M.-I."/>
            <person name="Town C.D."/>
            <person name="Fujii C.Y."/>
            <person name="Mason T.M."/>
            <person name="Bowman C.L."/>
            <person name="Barnstead M.E."/>
            <person name="Feldblyum T.V."/>
            <person name="Buell C.R."/>
            <person name="Ketchum K.A."/>
            <person name="Lee J.J."/>
            <person name="Ronning C.M."/>
            <person name="Koo H.L."/>
            <person name="Moffat K.S."/>
            <person name="Cronin L.A."/>
            <person name="Shen M."/>
            <person name="Pai G."/>
            <person name="Van Aken S."/>
            <person name="Umayam L."/>
            <person name="Tallon L.J."/>
            <person name="Gill J.E."/>
            <person name="Adams M.D."/>
            <person name="Carrera A.J."/>
            <person name="Creasy T.H."/>
            <person name="Goodman H.M."/>
            <person name="Somerville C.R."/>
            <person name="Copenhaver G.P."/>
            <person name="Preuss D."/>
            <person name="Nierman W.C."/>
            <person name="White O."/>
            <person name="Eisen J.A."/>
            <person name="Salzberg S.L."/>
            <person name="Fraser C.M."/>
            <person name="Venter J.C."/>
        </authorList>
    </citation>
    <scope>NUCLEOTIDE SEQUENCE [LARGE SCALE GENOMIC DNA]</scope>
    <source>
        <strain>cv. Columbia</strain>
    </source>
</reference>
<reference key="5">
    <citation type="journal article" date="2017" name="Plant J.">
        <title>Araport11: a complete reannotation of the Arabidopsis thaliana reference genome.</title>
        <authorList>
            <person name="Cheng C.Y."/>
            <person name="Krishnakumar V."/>
            <person name="Chan A.P."/>
            <person name="Thibaud-Nissen F."/>
            <person name="Schobel S."/>
            <person name="Town C.D."/>
        </authorList>
    </citation>
    <scope>GENOME REANNOTATION</scope>
    <source>
        <strain>cv. Columbia</strain>
    </source>
</reference>
<reference key="6">
    <citation type="journal article" date="2003" name="Science">
        <title>Empirical analysis of transcriptional activity in the Arabidopsis genome.</title>
        <authorList>
            <person name="Yamada K."/>
            <person name="Lim J."/>
            <person name="Dale J.M."/>
            <person name="Chen H."/>
            <person name="Shinn P."/>
            <person name="Palm C.J."/>
            <person name="Southwick A.M."/>
            <person name="Wu H.C."/>
            <person name="Kim C.J."/>
            <person name="Nguyen M."/>
            <person name="Pham P.K."/>
            <person name="Cheuk R.F."/>
            <person name="Karlin-Newmann G."/>
            <person name="Liu S.X."/>
            <person name="Lam B."/>
            <person name="Sakano H."/>
            <person name="Wu T."/>
            <person name="Yu G."/>
            <person name="Miranda M."/>
            <person name="Quach H.L."/>
            <person name="Tripp M."/>
            <person name="Chang C.H."/>
            <person name="Lee J.M."/>
            <person name="Toriumi M.J."/>
            <person name="Chan M.M."/>
            <person name="Tang C.C."/>
            <person name="Onodera C.S."/>
            <person name="Deng J.M."/>
            <person name="Akiyama K."/>
            <person name="Ansari Y."/>
            <person name="Arakawa T."/>
            <person name="Banh J."/>
            <person name="Banno F."/>
            <person name="Bowser L."/>
            <person name="Brooks S.Y."/>
            <person name="Carninci P."/>
            <person name="Chao Q."/>
            <person name="Choy N."/>
            <person name="Enju A."/>
            <person name="Goldsmith A.D."/>
            <person name="Gurjal M."/>
            <person name="Hansen N.F."/>
            <person name="Hayashizaki Y."/>
            <person name="Johnson-Hopson C."/>
            <person name="Hsuan V.W."/>
            <person name="Iida K."/>
            <person name="Karnes M."/>
            <person name="Khan S."/>
            <person name="Koesema E."/>
            <person name="Ishida J."/>
            <person name="Jiang P.X."/>
            <person name="Jones T."/>
            <person name="Kawai J."/>
            <person name="Kamiya A."/>
            <person name="Meyers C."/>
            <person name="Nakajima M."/>
            <person name="Narusaka M."/>
            <person name="Seki M."/>
            <person name="Sakurai T."/>
            <person name="Satou M."/>
            <person name="Tamse R."/>
            <person name="Vaysberg M."/>
            <person name="Wallender E.K."/>
            <person name="Wong C."/>
            <person name="Yamamura Y."/>
            <person name="Yuan S."/>
            <person name="Shinozaki K."/>
            <person name="Davis R.W."/>
            <person name="Theologis A."/>
            <person name="Ecker J.R."/>
        </authorList>
    </citation>
    <scope>NUCLEOTIDE SEQUENCE [LARGE SCALE MRNA]</scope>
    <source>
        <strain>cv. Columbia</strain>
    </source>
</reference>
<reference key="7">
    <citation type="journal article" date="1998" name="Plant Physiol.">
        <title>Arabidopsis Rho-related GTPases: differential gene expression in pollen and polar localization in fission yeast.</title>
        <authorList>
            <person name="Li H."/>
            <person name="Wu G."/>
            <person name="Ware D."/>
            <person name="Davis K.R."/>
            <person name="Yang Z."/>
        </authorList>
    </citation>
    <scope>TISSUE SPECIFICITY</scope>
</reference>
<reference key="8">
    <citation type="journal article" date="2008" name="Proc. Natl. Acad. Sci. U.S.A.">
        <title>A SPIKE1 signaling complex controls actin-dependent cell morphogenesis through the heteromeric WAVE and ARP2/3 complexes.</title>
        <authorList>
            <person name="Basu D."/>
            <person name="Le J."/>
            <person name="Zakharova T."/>
            <person name="Mallery E.L."/>
            <person name="Szymanski D.B."/>
        </authorList>
    </citation>
    <scope>INTERACTION WITH SPK1</scope>
    <source>
        <strain>cv. Columbia</strain>
    </source>
</reference>
<keyword id="KW-0963">Cytoplasm</keyword>
<keyword id="KW-0342">GTP-binding</keyword>
<keyword id="KW-0449">Lipoprotein</keyword>
<keyword id="KW-0472">Membrane</keyword>
<keyword id="KW-0488">Methylation</keyword>
<keyword id="KW-0547">Nucleotide-binding</keyword>
<keyword id="KW-0636">Prenylation</keyword>
<keyword id="KW-1185">Reference proteome</keyword>
<accession>Q38902</accession>
<name>RAC1_ARATH</name>
<protein>
    <recommendedName>
        <fullName>Rac-like GTP-binding protein ARAC1</fullName>
    </recommendedName>
    <alternativeName>
        <fullName>GTPase protein ROP3</fullName>
    </alternativeName>
</protein>
<gene>
    <name type="primary">ARAC1</name>
    <name type="synonym">ATGP2</name>
    <name type="synonym">ROP3</name>
    <name type="ordered locus">At2g17800</name>
    <name type="ORF">T17A5.14</name>
</gene>